<name>LIS1_CANTT</name>
<accession>C5MJE8</accession>
<feature type="chain" id="PRO_0000405075" description="Nuclear distribution protein PAC1">
    <location>
        <begin position="1"/>
        <end position="490"/>
    </location>
</feature>
<feature type="repeat" description="WD 1">
    <location>
        <begin position="118"/>
        <end position="157"/>
    </location>
</feature>
<feature type="repeat" description="WD 2">
    <location>
        <begin position="163"/>
        <end position="204"/>
    </location>
</feature>
<feature type="repeat" description="WD 3">
    <location>
        <begin position="205"/>
        <end position="245"/>
    </location>
</feature>
<feature type="repeat" description="WD 4">
    <location>
        <begin position="251"/>
        <end position="290"/>
    </location>
</feature>
<feature type="repeat" description="WD 5">
    <location>
        <begin position="293"/>
        <end position="327"/>
    </location>
</feature>
<feature type="repeat" description="WD 6">
    <location>
        <begin position="328"/>
        <end position="367"/>
    </location>
</feature>
<feature type="repeat" description="WD 7">
    <location>
        <begin position="388"/>
        <end position="427"/>
    </location>
</feature>
<feature type="repeat" description="WD 8">
    <location>
        <begin position="436"/>
        <end position="487"/>
    </location>
</feature>
<feature type="coiled-coil region" evidence="1">
    <location>
        <begin position="65"/>
        <end position="96"/>
    </location>
</feature>
<protein>
    <recommendedName>
        <fullName evidence="1">Nuclear distribution protein PAC1</fullName>
    </recommendedName>
    <alternativeName>
        <fullName evidence="1">Lissencephaly-1 homolog</fullName>
        <shortName evidence="1">LIS-1</shortName>
    </alternativeName>
    <alternativeName>
        <fullName evidence="1">nudF homolog</fullName>
    </alternativeName>
</protein>
<gene>
    <name evidence="1" type="primary">PAC1</name>
    <name evidence="1" type="synonym">LIS1</name>
    <name type="ORF">CTRG_06191</name>
</gene>
<proteinExistence type="inferred from homology"/>
<sequence length="490" mass="55618">MMERSQILTERQQSELNKAIIQYLQPICSQENNEVLDKLTSMLKIESTELDGSDIVDNYLEKKWSTVLRLQKKIIDLENEIHNLTNIINTTNSETNGVVLSKDKINWIPKGASKQTYQCENVVATVRLHPNLPLVFNGCNDGNLYIWNLTNDDNTIPEKRIKAHTRSINKMCFSYRKPYYLATCSSDLTIKIWDEKFNHIRTLNGHEHTVSSVKFSPSDSNILYSVSRDKNIRVWDISQGVCLKSFVGHSEWCRDLDAVASETQGDFVLTCSNDQSARLSHINSGVGVAMFVGHTHVVESVKFLPKIQANELIDEYITKNIDQFPSIPSELLKDPIYDELGFKYCVSASRDNTIKLWLIPPPTLIPHRSPLPSKYNNSQGWLIAEFKGHSSWVKCLSVHPNGKFIISGSDDKTIKFWDLSGLIETGSVTAIKTISGHEGFINDIDFARLTDSESNTDKELTSEEYLKDVEKRMRCLFISGSADNSIKLWS</sequence>
<evidence type="ECO:0000255" key="1">
    <source>
        <dbReference type="HAMAP-Rule" id="MF_03141"/>
    </source>
</evidence>
<organism>
    <name type="scientific">Candida tropicalis (strain ATCC MYA-3404 / T1)</name>
    <name type="common">Yeast</name>
    <dbReference type="NCBI Taxonomy" id="294747"/>
    <lineage>
        <taxon>Eukaryota</taxon>
        <taxon>Fungi</taxon>
        <taxon>Dikarya</taxon>
        <taxon>Ascomycota</taxon>
        <taxon>Saccharomycotina</taxon>
        <taxon>Pichiomycetes</taxon>
        <taxon>Debaryomycetaceae</taxon>
        <taxon>Candida/Lodderomyces clade</taxon>
        <taxon>Candida</taxon>
    </lineage>
</organism>
<dbReference type="EMBL" id="GG692406">
    <property type="protein sequence ID" value="EER30151.1"/>
    <property type="molecule type" value="Genomic_DNA"/>
</dbReference>
<dbReference type="RefSeq" id="XP_002546713.1">
    <property type="nucleotide sequence ID" value="XM_002546667.1"/>
</dbReference>
<dbReference type="SMR" id="C5MJE8"/>
<dbReference type="STRING" id="294747.C5MJE8"/>
<dbReference type="EnsemblFungi" id="CTRG_06191-t43_1">
    <property type="protein sequence ID" value="CTRG_06191-t43_1-p1"/>
    <property type="gene ID" value="CTRG_06191"/>
</dbReference>
<dbReference type="GeneID" id="8300052"/>
<dbReference type="KEGG" id="ctp:CTRG_06191"/>
<dbReference type="VEuPathDB" id="FungiDB:CTRG_06191"/>
<dbReference type="eggNOG" id="KOG0295">
    <property type="taxonomic scope" value="Eukaryota"/>
</dbReference>
<dbReference type="OrthoDB" id="10264588at2759"/>
<dbReference type="Proteomes" id="UP000002037">
    <property type="component" value="Unassembled WGS sequence"/>
</dbReference>
<dbReference type="GO" id="GO:0005737">
    <property type="term" value="C:cytoplasm"/>
    <property type="evidence" value="ECO:0007669"/>
    <property type="project" value="UniProtKB-UniRule"/>
</dbReference>
<dbReference type="GO" id="GO:0005874">
    <property type="term" value="C:microtubule"/>
    <property type="evidence" value="ECO:0007669"/>
    <property type="project" value="UniProtKB-KW"/>
</dbReference>
<dbReference type="GO" id="GO:0005875">
    <property type="term" value="C:microtubule associated complex"/>
    <property type="evidence" value="ECO:0007669"/>
    <property type="project" value="UniProtKB-UniRule"/>
</dbReference>
<dbReference type="GO" id="GO:0000922">
    <property type="term" value="C:spindle pole"/>
    <property type="evidence" value="ECO:0007669"/>
    <property type="project" value="UniProtKB-SubCell"/>
</dbReference>
<dbReference type="GO" id="GO:0070840">
    <property type="term" value="F:dynein complex binding"/>
    <property type="evidence" value="ECO:0007669"/>
    <property type="project" value="UniProtKB-UniRule"/>
</dbReference>
<dbReference type="GO" id="GO:0051301">
    <property type="term" value="P:cell division"/>
    <property type="evidence" value="ECO:0007669"/>
    <property type="project" value="UniProtKB-KW"/>
</dbReference>
<dbReference type="GO" id="GO:0000132">
    <property type="term" value="P:establishment of mitotic spindle orientation"/>
    <property type="evidence" value="ECO:0007669"/>
    <property type="project" value="UniProtKB-UniRule"/>
</dbReference>
<dbReference type="GO" id="GO:0051012">
    <property type="term" value="P:microtubule sliding"/>
    <property type="evidence" value="ECO:0007669"/>
    <property type="project" value="UniProtKB-UniRule"/>
</dbReference>
<dbReference type="CDD" id="cd00200">
    <property type="entry name" value="WD40"/>
    <property type="match status" value="1"/>
</dbReference>
<dbReference type="FunFam" id="2.130.10.10:FF:000902">
    <property type="entry name" value="Nuclear distribution protein PAC1"/>
    <property type="match status" value="1"/>
</dbReference>
<dbReference type="Gene3D" id="1.20.960.30">
    <property type="match status" value="1"/>
</dbReference>
<dbReference type="Gene3D" id="2.130.10.10">
    <property type="entry name" value="YVTN repeat-like/Quinoprotein amine dehydrogenase"/>
    <property type="match status" value="1"/>
</dbReference>
<dbReference type="HAMAP" id="MF_03141">
    <property type="entry name" value="lis1"/>
    <property type="match status" value="1"/>
</dbReference>
<dbReference type="InterPro" id="IPR017252">
    <property type="entry name" value="Dynein_regulator_LIS1"/>
</dbReference>
<dbReference type="InterPro" id="IPR020472">
    <property type="entry name" value="G-protein_beta_WD-40_rep"/>
</dbReference>
<dbReference type="InterPro" id="IPR037190">
    <property type="entry name" value="LIS1_N"/>
</dbReference>
<dbReference type="InterPro" id="IPR015943">
    <property type="entry name" value="WD40/YVTN_repeat-like_dom_sf"/>
</dbReference>
<dbReference type="InterPro" id="IPR019775">
    <property type="entry name" value="WD40_repeat_CS"/>
</dbReference>
<dbReference type="InterPro" id="IPR036322">
    <property type="entry name" value="WD40_repeat_dom_sf"/>
</dbReference>
<dbReference type="InterPro" id="IPR001680">
    <property type="entry name" value="WD40_rpt"/>
</dbReference>
<dbReference type="InterPro" id="IPR050349">
    <property type="entry name" value="WD_LIS1/nudF_dynein_reg"/>
</dbReference>
<dbReference type="PANTHER" id="PTHR44129">
    <property type="entry name" value="WD REPEAT-CONTAINING PROTEIN POP1"/>
    <property type="match status" value="1"/>
</dbReference>
<dbReference type="Pfam" id="PF00400">
    <property type="entry name" value="WD40"/>
    <property type="match status" value="6"/>
</dbReference>
<dbReference type="PIRSF" id="PIRSF037647">
    <property type="entry name" value="Dynein_regulator_Lis1"/>
    <property type="match status" value="1"/>
</dbReference>
<dbReference type="PRINTS" id="PR00320">
    <property type="entry name" value="GPROTEINBRPT"/>
</dbReference>
<dbReference type="SMART" id="SM00320">
    <property type="entry name" value="WD40"/>
    <property type="match status" value="7"/>
</dbReference>
<dbReference type="SUPFAM" id="SSF109925">
    <property type="entry name" value="Lissencephaly-1 protein (Lis-1, PAF-AH alpha) N-terminal domain"/>
    <property type="match status" value="1"/>
</dbReference>
<dbReference type="SUPFAM" id="SSF50978">
    <property type="entry name" value="WD40 repeat-like"/>
    <property type="match status" value="1"/>
</dbReference>
<dbReference type="PROSITE" id="PS00678">
    <property type="entry name" value="WD_REPEATS_1"/>
    <property type="match status" value="2"/>
</dbReference>
<dbReference type="PROSITE" id="PS50082">
    <property type="entry name" value="WD_REPEATS_2"/>
    <property type="match status" value="5"/>
</dbReference>
<dbReference type="PROSITE" id="PS50294">
    <property type="entry name" value="WD_REPEATS_REGION"/>
    <property type="match status" value="1"/>
</dbReference>
<comment type="function">
    <text evidence="1">Positively regulates the activity of the minus-end directed microtubule motor protein dynein. Plays a central role in positioning the mitotic spindle at the bud neck during cell division. Targets cytoplasmic dynein to microtubule plus ends, thereby promoting dynein-mediated microtubule sliding along the bud cortex and consequently the movement of the mitotic spindle to the bud neck.</text>
</comment>
<comment type="subunit">
    <text evidence="1">Self-associates. Interacts with NDL1 and dynein.</text>
</comment>
<comment type="subcellular location">
    <subcellularLocation>
        <location evidence="1">Cytoplasm</location>
        <location evidence="1">Cytoskeleton</location>
    </subcellularLocation>
    <subcellularLocation>
        <location evidence="1">Cytoplasm</location>
        <location evidence="1">Cytoskeleton</location>
        <location evidence="1">Spindle pole</location>
    </subcellularLocation>
    <text evidence="1">Localizes to the plus ends of microtubules and the mitotic spindle poles.</text>
</comment>
<comment type="similarity">
    <text evidence="1">Belongs to the WD repeat LIS1/nudF family.</text>
</comment>
<keyword id="KW-0131">Cell cycle</keyword>
<keyword id="KW-0132">Cell division</keyword>
<keyword id="KW-0175">Coiled coil</keyword>
<keyword id="KW-0963">Cytoplasm</keyword>
<keyword id="KW-0206">Cytoskeleton</keyword>
<keyword id="KW-0493">Microtubule</keyword>
<keyword id="KW-0498">Mitosis</keyword>
<keyword id="KW-1185">Reference proteome</keyword>
<keyword id="KW-0677">Repeat</keyword>
<keyword id="KW-0813">Transport</keyword>
<keyword id="KW-0853">WD repeat</keyword>
<reference key="1">
    <citation type="journal article" date="2009" name="Nature">
        <title>Evolution of pathogenicity and sexual reproduction in eight Candida genomes.</title>
        <authorList>
            <person name="Butler G."/>
            <person name="Rasmussen M.D."/>
            <person name="Lin M.F."/>
            <person name="Santos M.A.S."/>
            <person name="Sakthikumar S."/>
            <person name="Munro C.A."/>
            <person name="Rheinbay E."/>
            <person name="Grabherr M."/>
            <person name="Forche A."/>
            <person name="Reedy J.L."/>
            <person name="Agrafioti I."/>
            <person name="Arnaud M.B."/>
            <person name="Bates S."/>
            <person name="Brown A.J.P."/>
            <person name="Brunke S."/>
            <person name="Costanzo M.C."/>
            <person name="Fitzpatrick D.A."/>
            <person name="de Groot P.W.J."/>
            <person name="Harris D."/>
            <person name="Hoyer L.L."/>
            <person name="Hube B."/>
            <person name="Klis F.M."/>
            <person name="Kodira C."/>
            <person name="Lennard N."/>
            <person name="Logue M.E."/>
            <person name="Martin R."/>
            <person name="Neiman A.M."/>
            <person name="Nikolaou E."/>
            <person name="Quail M.A."/>
            <person name="Quinn J."/>
            <person name="Santos M.C."/>
            <person name="Schmitzberger F.F."/>
            <person name="Sherlock G."/>
            <person name="Shah P."/>
            <person name="Silverstein K.A.T."/>
            <person name="Skrzypek M.S."/>
            <person name="Soll D."/>
            <person name="Staggs R."/>
            <person name="Stansfield I."/>
            <person name="Stumpf M.P.H."/>
            <person name="Sudbery P.E."/>
            <person name="Srikantha T."/>
            <person name="Zeng Q."/>
            <person name="Berman J."/>
            <person name="Berriman M."/>
            <person name="Heitman J."/>
            <person name="Gow N.A.R."/>
            <person name="Lorenz M.C."/>
            <person name="Birren B.W."/>
            <person name="Kellis M."/>
            <person name="Cuomo C.A."/>
        </authorList>
    </citation>
    <scope>NUCLEOTIDE SEQUENCE [LARGE SCALE GENOMIC DNA]</scope>
    <source>
        <strain>ATCC MYA-3404 / T1</strain>
    </source>
</reference>